<reference key="1">
    <citation type="journal article" date="1994" name="Proc. Natl. Acad. Sci. U.S.A.">
        <title>The expression of nifA in Azorhizobium caulinodans requires a gene product homologous to Escherichia coli HF-I, an RNA-binding protein involved in the replication of phage Q beta RNA.</title>
        <authorList>
            <person name="Kaminski P.A."/>
            <person name="Desnoues N."/>
            <person name="Elmerich C."/>
        </authorList>
    </citation>
    <scope>NUCLEOTIDE SEQUENCE [GENOMIC DNA]</scope>
    <scope>FUNCTION</scope>
</reference>
<reference key="2">
    <citation type="submission" date="2007-04" db="EMBL/GenBank/DDBJ databases">
        <title>Complete genome sequence of the nitrogen-fixing bacterium Azorhizobium caulinodans ORS571.</title>
        <authorList>
            <person name="Lee K.B."/>
            <person name="Backer P.D."/>
            <person name="Aono T."/>
            <person name="Liu C.T."/>
            <person name="Suzuki S."/>
            <person name="Suzuki T."/>
            <person name="Kaneko T."/>
            <person name="Yamada M."/>
            <person name="Tabata S."/>
            <person name="Kupfer D.M."/>
            <person name="Najar F.Z."/>
            <person name="Wiley G.B."/>
            <person name="Roe B."/>
            <person name="Binnewies T."/>
            <person name="Ussery D."/>
            <person name="Vereecke D."/>
            <person name="Gevers D."/>
            <person name="Holsters M."/>
            <person name="Oyaizu H."/>
        </authorList>
    </citation>
    <scope>NUCLEOTIDE SEQUENCE [LARGE SCALE GENOMIC DNA]</scope>
    <source>
        <strain>ATCC 43989 / DSM 5975 / JCM 20966 / LMG 6465 / NBRC 14845 / NCIMB 13405 / ORS 571</strain>
    </source>
</reference>
<dbReference type="EMBL" id="X76450">
    <property type="protein sequence ID" value="CAA53989.1"/>
    <property type="molecule type" value="Genomic_DNA"/>
</dbReference>
<dbReference type="EMBL" id="AP009384">
    <property type="protein sequence ID" value="BAF89078.1"/>
    <property type="molecule type" value="Genomic_DNA"/>
</dbReference>
<dbReference type="PIR" id="I39519">
    <property type="entry name" value="I39519"/>
</dbReference>
<dbReference type="RefSeq" id="WP_012171604.1">
    <property type="nucleotide sequence ID" value="NC_009937.1"/>
</dbReference>
<dbReference type="SMR" id="Q43971"/>
<dbReference type="STRING" id="438753.AZC_3080"/>
<dbReference type="KEGG" id="azc:AZC_3080"/>
<dbReference type="eggNOG" id="COG1923">
    <property type="taxonomic scope" value="Bacteria"/>
</dbReference>
<dbReference type="HOGENOM" id="CLU_113688_0_0_5"/>
<dbReference type="Proteomes" id="UP000000270">
    <property type="component" value="Chromosome"/>
</dbReference>
<dbReference type="GO" id="GO:0005829">
    <property type="term" value="C:cytosol"/>
    <property type="evidence" value="ECO:0007669"/>
    <property type="project" value="TreeGrafter"/>
</dbReference>
<dbReference type="GO" id="GO:0003723">
    <property type="term" value="F:RNA binding"/>
    <property type="evidence" value="ECO:0007669"/>
    <property type="project" value="UniProtKB-UniRule"/>
</dbReference>
<dbReference type="GO" id="GO:0006355">
    <property type="term" value="P:regulation of DNA-templated transcription"/>
    <property type="evidence" value="ECO:0007669"/>
    <property type="project" value="InterPro"/>
</dbReference>
<dbReference type="GO" id="GO:0043487">
    <property type="term" value="P:regulation of RNA stability"/>
    <property type="evidence" value="ECO:0007669"/>
    <property type="project" value="TreeGrafter"/>
</dbReference>
<dbReference type="GO" id="GO:0045974">
    <property type="term" value="P:regulation of translation, ncRNA-mediated"/>
    <property type="evidence" value="ECO:0007669"/>
    <property type="project" value="TreeGrafter"/>
</dbReference>
<dbReference type="CDD" id="cd01716">
    <property type="entry name" value="Hfq"/>
    <property type="match status" value="1"/>
</dbReference>
<dbReference type="FunFam" id="2.30.30.100:FF:000001">
    <property type="entry name" value="RNA-binding protein Hfq"/>
    <property type="match status" value="1"/>
</dbReference>
<dbReference type="Gene3D" id="2.30.30.100">
    <property type="match status" value="1"/>
</dbReference>
<dbReference type="HAMAP" id="MF_00436">
    <property type="entry name" value="Hfq"/>
    <property type="match status" value="1"/>
</dbReference>
<dbReference type="InterPro" id="IPR005001">
    <property type="entry name" value="Hfq"/>
</dbReference>
<dbReference type="InterPro" id="IPR010920">
    <property type="entry name" value="LSM_dom_sf"/>
</dbReference>
<dbReference type="InterPro" id="IPR047575">
    <property type="entry name" value="Sm"/>
</dbReference>
<dbReference type="NCBIfam" id="TIGR02383">
    <property type="entry name" value="Hfq"/>
    <property type="match status" value="1"/>
</dbReference>
<dbReference type="NCBIfam" id="NF001602">
    <property type="entry name" value="PRK00395.1"/>
    <property type="match status" value="1"/>
</dbReference>
<dbReference type="PANTHER" id="PTHR34772">
    <property type="entry name" value="RNA-BINDING PROTEIN HFQ"/>
    <property type="match status" value="1"/>
</dbReference>
<dbReference type="PANTHER" id="PTHR34772:SF1">
    <property type="entry name" value="RNA-BINDING PROTEIN HFQ"/>
    <property type="match status" value="1"/>
</dbReference>
<dbReference type="Pfam" id="PF17209">
    <property type="entry name" value="Hfq"/>
    <property type="match status" value="1"/>
</dbReference>
<dbReference type="SUPFAM" id="SSF50182">
    <property type="entry name" value="Sm-like ribonucleoproteins"/>
    <property type="match status" value="1"/>
</dbReference>
<dbReference type="PROSITE" id="PS52002">
    <property type="entry name" value="SM"/>
    <property type="match status" value="1"/>
</dbReference>
<proteinExistence type="inferred from homology"/>
<keyword id="KW-1185">Reference proteome</keyword>
<keyword id="KW-0694">RNA-binding</keyword>
<keyword id="KW-0346">Stress response</keyword>
<name>HFQ_AZOC5</name>
<accession>Q43971</accession>
<accession>A8IBJ6</accession>
<feature type="chain" id="PRO_0000095613" description="RNA-binding protein Hfq">
    <location>
        <begin position="1"/>
        <end position="85"/>
    </location>
</feature>
<feature type="domain" description="Sm" evidence="2">
    <location>
        <begin position="11"/>
        <end position="71"/>
    </location>
</feature>
<evidence type="ECO:0000255" key="1">
    <source>
        <dbReference type="HAMAP-Rule" id="MF_00436"/>
    </source>
</evidence>
<evidence type="ECO:0000255" key="2">
    <source>
        <dbReference type="PROSITE-ProRule" id="PRU01346"/>
    </source>
</evidence>
<evidence type="ECO:0000269" key="3">
    <source>
    </source>
</evidence>
<organism>
    <name type="scientific">Azorhizobium caulinodans (strain ATCC 43989 / DSM 5975 / JCM 20966 / LMG 6465 / NBRC 14845 / NCIMB 13405 / ORS 571)</name>
    <dbReference type="NCBI Taxonomy" id="438753"/>
    <lineage>
        <taxon>Bacteria</taxon>
        <taxon>Pseudomonadati</taxon>
        <taxon>Pseudomonadota</taxon>
        <taxon>Alphaproteobacteria</taxon>
        <taxon>Hyphomicrobiales</taxon>
        <taxon>Xanthobacteraceae</taxon>
        <taxon>Azorhizobium</taxon>
    </lineage>
</organism>
<sequence>MAAERTQNLQDTFLNHVRKSKTPLTIFLVNGVKLQGVVTWFDNFCVLLRRDGHSQLVYKHAISTIMPGHPVQLFDPTDEVASEKA</sequence>
<protein>
    <recommendedName>
        <fullName evidence="1">RNA-binding protein Hfq</fullName>
    </recommendedName>
</protein>
<comment type="function">
    <text evidence="1 3">RNA chaperone that binds small regulatory RNA (sRNAs) and mRNAs to facilitate mRNA translational regulation in response to envelope stress, environmental stress and changes in metabolite concentrations. Also binds with high specificity to tRNAs (By similarity). Seems to be involved in the regulation of NifA.</text>
</comment>
<comment type="subunit">
    <text evidence="1">Homohexamer.</text>
</comment>
<comment type="similarity">
    <text evidence="1">Belongs to the Hfq family.</text>
</comment>
<gene>
    <name evidence="1" type="primary">hfq</name>
    <name type="synonym">nfrA</name>
    <name type="ordered locus">AZC_3080</name>
</gene>